<sequence length="65" mass="7396">KKEGYLVGNDGCKYGCFTRPAQYCESECSLRKGTGGYCYAWLACYCYNMPDWVPTWNSAKNRCGK</sequence>
<comment type="function">
    <text evidence="2">Beta toxins bind voltage-independently at site-4 of sodium channels (Nav) and shift the voltage of activation toward more negative potentials thereby affecting sodium channel activation and promoting spontaneous and repetitive firing (PubMed:31402191). This toxin acts on human Nav1.4/SCN4A and Nav1.6/SCN8A voltage-gated sodium channels (PubMed:31402191).</text>
</comment>
<comment type="subcellular location">
    <subcellularLocation>
        <location evidence="2">Secreted</location>
    </subcellularLocation>
</comment>
<comment type="tissue specificity">
    <text evidence="5">Expressed by the venom gland.</text>
</comment>
<comment type="domain">
    <text evidence="4">Has the structural arrangement of an alpha-helix connected to antiparallel beta-sheets by disulfide bonds (CS-alpha/beta).</text>
</comment>
<comment type="similarity">
    <text evidence="4">Belongs to the long (4 C-C) scorpion toxin superfamily. Sodium channel inhibitor family.</text>
</comment>
<feature type="chain" id="PRO_0000448248" description="Beta-mammal toxin Tma1">
    <location>
        <begin position="1"/>
        <end position="65"/>
    </location>
</feature>
<feature type="domain" description="LCN-type CS-alpha/beta" evidence="1">
    <location>
        <begin position="2"/>
        <end position="64"/>
    </location>
</feature>
<feature type="disulfide bond" evidence="1">
    <location>
        <begin position="12"/>
        <end position="63"/>
    </location>
</feature>
<feature type="disulfide bond" evidence="1">
    <location>
        <begin position="16"/>
        <end position="38"/>
    </location>
</feature>
<feature type="disulfide bond" evidence="1">
    <location>
        <begin position="24"/>
        <end position="44"/>
    </location>
</feature>
<feature type="disulfide bond" evidence="1">
    <location>
        <begin position="28"/>
        <end position="46"/>
    </location>
</feature>
<dbReference type="SMR" id="C0HLL9"/>
<dbReference type="GO" id="GO:0005576">
    <property type="term" value="C:extracellular region"/>
    <property type="evidence" value="ECO:0000314"/>
    <property type="project" value="UniProtKB"/>
</dbReference>
<dbReference type="GO" id="GO:0019871">
    <property type="term" value="F:sodium channel inhibitor activity"/>
    <property type="evidence" value="ECO:0007669"/>
    <property type="project" value="InterPro"/>
</dbReference>
<dbReference type="GO" id="GO:0090729">
    <property type="term" value="F:toxin activity"/>
    <property type="evidence" value="ECO:0000314"/>
    <property type="project" value="UniProtKB"/>
</dbReference>
<dbReference type="GO" id="GO:0098542">
    <property type="term" value="P:defense response to other organism"/>
    <property type="evidence" value="ECO:0000314"/>
    <property type="project" value="UniProtKB"/>
</dbReference>
<dbReference type="GO" id="GO:0044493">
    <property type="term" value="P:envenomation resulting in negative regulation of voltage-gated sodium channel activity in another organism"/>
    <property type="evidence" value="ECO:0000314"/>
    <property type="project" value="UniProtKB"/>
</dbReference>
<dbReference type="CDD" id="cd23106">
    <property type="entry name" value="neurotoxins_LC_scorpion"/>
    <property type="match status" value="1"/>
</dbReference>
<dbReference type="FunFam" id="3.30.30.10:FF:000002">
    <property type="entry name" value="Alpha-like toxin BmK-M1"/>
    <property type="match status" value="1"/>
</dbReference>
<dbReference type="Gene3D" id="3.30.30.10">
    <property type="entry name" value="Knottin, scorpion toxin-like"/>
    <property type="match status" value="1"/>
</dbReference>
<dbReference type="InterPro" id="IPR044062">
    <property type="entry name" value="LCN-type_CS_alpha_beta_dom"/>
</dbReference>
<dbReference type="InterPro" id="IPR003614">
    <property type="entry name" value="Scorpion_toxin-like"/>
</dbReference>
<dbReference type="InterPro" id="IPR036574">
    <property type="entry name" value="Scorpion_toxin-like_sf"/>
</dbReference>
<dbReference type="InterPro" id="IPR018218">
    <property type="entry name" value="Scorpion_toxinL"/>
</dbReference>
<dbReference type="InterPro" id="IPR002061">
    <property type="entry name" value="Scorpion_toxinL/defensin"/>
</dbReference>
<dbReference type="Pfam" id="PF00537">
    <property type="entry name" value="Toxin_3"/>
    <property type="match status" value="1"/>
</dbReference>
<dbReference type="PRINTS" id="PR00285">
    <property type="entry name" value="SCORPNTOXIN"/>
</dbReference>
<dbReference type="SMART" id="SM00505">
    <property type="entry name" value="Knot1"/>
    <property type="match status" value="1"/>
</dbReference>
<dbReference type="SUPFAM" id="SSF57095">
    <property type="entry name" value="Scorpion toxin-like"/>
    <property type="match status" value="1"/>
</dbReference>
<dbReference type="PROSITE" id="PS51863">
    <property type="entry name" value="LCN_CSAB"/>
    <property type="match status" value="1"/>
</dbReference>
<accession>C0HLL9</accession>
<evidence type="ECO:0000255" key="1">
    <source>
        <dbReference type="PROSITE-ProRule" id="PRU01210"/>
    </source>
</evidence>
<evidence type="ECO:0000269" key="2">
    <source>
    </source>
</evidence>
<evidence type="ECO:0000303" key="3">
    <source>
    </source>
</evidence>
<evidence type="ECO:0000305" key="4"/>
<evidence type="ECO:0000305" key="5">
    <source>
    </source>
</evidence>
<reference key="1">
    <citation type="journal article" date="2019" name="Toxicon">
        <title>Structural and functional characterization of toxic peptides purified from the venom of the Colombian scorpion Tityus macrochirus.</title>
        <authorList>
            <person name="Rincon-Cortes C.A."/>
            <person name="Olamendi-Portugal T."/>
            <person name="Carcamo-Noriega E.N."/>
            <person name="Santillan E.G."/>
            <person name="Zuniga F.Z."/>
            <person name="Reyes-Montano E.A."/>
            <person name="Vega Castro N.A."/>
            <person name="Possani L.D."/>
        </authorList>
    </citation>
    <scope>PROTEIN SEQUENCE</scope>
    <scope>FUNCTION</scope>
    <scope>SUBCELLULAR LOCATION</scope>
    <scope>TISSUE SPECIFICITY</scope>
    <source>
        <tissue evidence="3">Venom</tissue>
    </source>
</reference>
<organism evidence="3">
    <name type="scientific">Tityus macrochirus</name>
    <name type="common">Scorpion</name>
    <dbReference type="NCBI Taxonomy" id="2599738"/>
    <lineage>
        <taxon>Eukaryota</taxon>
        <taxon>Metazoa</taxon>
        <taxon>Ecdysozoa</taxon>
        <taxon>Arthropoda</taxon>
        <taxon>Chelicerata</taxon>
        <taxon>Arachnida</taxon>
        <taxon>Scorpiones</taxon>
        <taxon>Buthida</taxon>
        <taxon>Buthoidea</taxon>
        <taxon>Buthidae</taxon>
        <taxon>Tityus</taxon>
    </lineage>
</organism>
<keyword id="KW-0903">Direct protein sequencing</keyword>
<keyword id="KW-1015">Disulfide bond</keyword>
<keyword id="KW-0872">Ion channel impairing toxin</keyword>
<keyword id="KW-0528">Neurotoxin</keyword>
<keyword id="KW-0964">Secreted</keyword>
<keyword id="KW-0800">Toxin</keyword>
<keyword id="KW-0738">Voltage-gated sodium channel impairing toxin</keyword>
<protein>
    <recommendedName>
        <fullName evidence="3">Beta-mammal toxin Tma1</fullName>
    </recommendedName>
</protein>
<name>SCX1_TITMA</name>
<proteinExistence type="evidence at protein level"/>